<organism>
    <name type="scientific">Zea mays</name>
    <name type="common">Maize</name>
    <dbReference type="NCBI Taxonomy" id="4577"/>
    <lineage>
        <taxon>Eukaryota</taxon>
        <taxon>Viridiplantae</taxon>
        <taxon>Streptophyta</taxon>
        <taxon>Embryophyta</taxon>
        <taxon>Tracheophyta</taxon>
        <taxon>Spermatophyta</taxon>
        <taxon>Magnoliopsida</taxon>
        <taxon>Liliopsida</taxon>
        <taxon>Poales</taxon>
        <taxon>Poaceae</taxon>
        <taxon>PACMAD clade</taxon>
        <taxon>Panicoideae</taxon>
        <taxon>Andropogonodae</taxon>
        <taxon>Andropogoneae</taxon>
        <taxon>Tripsacinae</taxon>
        <taxon>Zea</taxon>
    </lineage>
</organism>
<proteinExistence type="evidence at transcript level"/>
<reference key="1">
    <citation type="journal article" date="2005" name="Plant Physiol.">
        <title>Identification and characterization of endoplasmic reticulum-associated degradation proteins differentially affected by endoplasmic reticulum stress.</title>
        <authorList>
            <person name="Kirst M.E."/>
            <person name="Meyer D.J."/>
            <person name="Gibbon B.C."/>
            <person name="Jung R."/>
            <person name="Boston R.S."/>
        </authorList>
    </citation>
    <scope>NUCLEOTIDE SEQUENCE [GENOMIC DNA / MRNA]</scope>
    <scope>FUNCTION</scope>
    <scope>SUBCELLULAR LOCATION</scope>
    <scope>TISSUE SPECIFICITY</scope>
    <scope>INDUCTION</scope>
    <source>
        <strain>cv. LH132</strain>
    </source>
</reference>
<gene>
    <name type="primary">DER2.1</name>
</gene>
<feature type="chain" id="PRO_0000249243" description="Derlin-2.1">
    <location>
        <begin position="1"/>
        <end position="249"/>
    </location>
</feature>
<feature type="topological domain" description="Cytoplasmic" evidence="1">
    <location>
        <begin position="1"/>
        <end position="21"/>
    </location>
</feature>
<feature type="transmembrane region" description="Helical; Name=1" evidence="1">
    <location>
        <begin position="22"/>
        <end position="42"/>
    </location>
</feature>
<feature type="topological domain" description="Lumenal" evidence="1">
    <location>
        <begin position="43"/>
        <end position="96"/>
    </location>
</feature>
<feature type="transmembrane region" description="Helical; Name=2" evidence="1">
    <location>
        <begin position="97"/>
        <end position="117"/>
    </location>
</feature>
<feature type="topological domain" description="Cytoplasmic" evidence="1">
    <location>
        <begin position="118"/>
        <end position="122"/>
    </location>
</feature>
<feature type="transmembrane region" description="Helical; Name=3" evidence="1">
    <location>
        <begin position="123"/>
        <end position="143"/>
    </location>
</feature>
<feature type="topological domain" description="Lumenal" evidence="1">
    <location>
        <begin position="144"/>
        <end position="152"/>
    </location>
</feature>
<feature type="transmembrane region" description="Helical; Name=4" evidence="1">
    <location>
        <begin position="153"/>
        <end position="173"/>
    </location>
</feature>
<feature type="topological domain" description="Cytoplasmic" evidence="1">
    <location>
        <begin position="174"/>
        <end position="249"/>
    </location>
</feature>
<name>DER21_MAIZE</name>
<comment type="function">
    <text evidence="2">May be involved in the degradation process of specific misfolded endoplasmic reticulum (ER) luminal proteins.</text>
</comment>
<comment type="subcellular location">
    <subcellularLocation>
        <location evidence="2">Endoplasmic reticulum membrane</location>
        <topology evidence="2">Multi-pass membrane protein</topology>
    </subcellularLocation>
</comment>
<comment type="tissue specificity">
    <text evidence="2">Expressed in roots, stalks, leaves, embryo and endosperm.</text>
</comment>
<comment type="induction">
    <text evidence="2">By endoplasmic reticulum stress.</text>
</comment>
<comment type="miscellaneous">
    <text>Associated with ER-derived protein bodies in endosperm.</text>
</comment>
<comment type="similarity">
    <text evidence="3">Belongs to the derlin family.</text>
</comment>
<comment type="sequence caution" evidence="3">
    <conflict type="erroneous gene model prediction">
        <sequence resource="EMBL-CDS" id="AAY41614"/>
    </conflict>
</comment>
<evidence type="ECO:0000255" key="1"/>
<evidence type="ECO:0000269" key="2">
    <source>
    </source>
</evidence>
<evidence type="ECO:0000305" key="3"/>
<keyword id="KW-0256">Endoplasmic reticulum</keyword>
<keyword id="KW-0472">Membrane</keyword>
<keyword id="KW-1185">Reference proteome</keyword>
<keyword id="KW-0346">Stress response</keyword>
<keyword id="KW-0812">Transmembrane</keyword>
<keyword id="KW-1133">Transmembrane helix</keyword>
<sequence>MAQAVEEWYRQMPIITRSYLTAAVVTTVGCTLEIISPYHLYLNPKLVVQHYEIWRLVTNFLYFRKMDLDFLFHMFFLARYCKLLEENSFRGRTADFFYMLLFGATVLTSIVLIGGMIPYISETFARILFLSNSLTFMMVYVWSKHNPFIHMSFLGLFTFTAAYLPWVLLGFSILVGSSTWVDLLGMIAGHVYYFLEDVYPRMTGRRPLKTPSFIKALFADDNVVVAQPPNAGIGAGARFGAMGLDPQAQ</sequence>
<protein>
    <recommendedName>
        <fullName>Derlin-2.1</fullName>
    </recommendedName>
    <alternativeName>
        <fullName>ZmDerlin2-1</fullName>
    </alternativeName>
</protein>
<accession>Q4G2J4</accession>
<accession>Q4G2J8</accession>
<dbReference type="EMBL" id="AY854015">
    <property type="protein sequence ID" value="AAY41610.1"/>
    <property type="molecule type" value="mRNA"/>
</dbReference>
<dbReference type="EMBL" id="AY854019">
    <property type="protein sequence ID" value="AAY41614.1"/>
    <property type="status" value="ALT_SEQ"/>
    <property type="molecule type" value="Genomic_DNA"/>
</dbReference>
<dbReference type="RefSeq" id="NP_001105798.1">
    <property type="nucleotide sequence ID" value="NM_001112328.1"/>
</dbReference>
<dbReference type="SMR" id="Q4G2J4"/>
<dbReference type="STRING" id="4577.Q4G2J4"/>
<dbReference type="PaxDb" id="4577-GRMZM2G082976_P01"/>
<dbReference type="EnsemblPlants" id="Zm00001eb210630_T001">
    <property type="protein sequence ID" value="Zm00001eb210630_P001"/>
    <property type="gene ID" value="Zm00001eb210630"/>
</dbReference>
<dbReference type="GeneID" id="606471"/>
<dbReference type="Gramene" id="Zm00001eb210630_T001">
    <property type="protein sequence ID" value="Zm00001eb210630_P001"/>
    <property type="gene ID" value="Zm00001eb210630"/>
</dbReference>
<dbReference type="KEGG" id="zma:606471"/>
<dbReference type="eggNOG" id="KOG0858">
    <property type="taxonomic scope" value="Eukaryota"/>
</dbReference>
<dbReference type="HOGENOM" id="CLU_051898_5_2_1"/>
<dbReference type="InParanoid" id="Q4G2J4"/>
<dbReference type="OMA" id="DFVFMFF"/>
<dbReference type="OrthoDB" id="1716531at2759"/>
<dbReference type="Proteomes" id="UP000007305">
    <property type="component" value="Chromosome 5"/>
</dbReference>
<dbReference type="ExpressionAtlas" id="Q4G2J4">
    <property type="expression patterns" value="baseline and differential"/>
</dbReference>
<dbReference type="GO" id="GO:0005789">
    <property type="term" value="C:endoplasmic reticulum membrane"/>
    <property type="evidence" value="ECO:0000318"/>
    <property type="project" value="GO_Central"/>
</dbReference>
<dbReference type="GO" id="GO:0005047">
    <property type="term" value="F:signal recognition particle binding"/>
    <property type="evidence" value="ECO:0000318"/>
    <property type="project" value="GO_Central"/>
</dbReference>
<dbReference type="GO" id="GO:0030968">
    <property type="term" value="P:endoplasmic reticulum unfolded protein response"/>
    <property type="evidence" value="ECO:0000318"/>
    <property type="project" value="GO_Central"/>
</dbReference>
<dbReference type="GO" id="GO:0036503">
    <property type="term" value="P:ERAD pathway"/>
    <property type="evidence" value="ECO:0000318"/>
    <property type="project" value="GO_Central"/>
</dbReference>
<dbReference type="InterPro" id="IPR007599">
    <property type="entry name" value="DER1"/>
</dbReference>
<dbReference type="InterPro" id="IPR035952">
    <property type="entry name" value="Rhomboid-like_sf"/>
</dbReference>
<dbReference type="PANTHER" id="PTHR11009">
    <property type="entry name" value="DER1-LIKE PROTEIN, DERLIN"/>
    <property type="match status" value="1"/>
</dbReference>
<dbReference type="Pfam" id="PF04511">
    <property type="entry name" value="DER1"/>
    <property type="match status" value="1"/>
</dbReference>
<dbReference type="SUPFAM" id="SSF144091">
    <property type="entry name" value="Rhomboid-like"/>
    <property type="match status" value="1"/>
</dbReference>